<keyword id="KW-0227">DNA damage</keyword>
<keyword id="KW-0234">DNA repair</keyword>
<keyword id="KW-0235">DNA replication</keyword>
<keyword id="KW-0255">Endonuclease</keyword>
<keyword id="KW-0269">Exonuclease</keyword>
<keyword id="KW-0378">Hydrolase</keyword>
<keyword id="KW-0460">Magnesium</keyword>
<keyword id="KW-0479">Metal-binding</keyword>
<keyword id="KW-0496">Mitochondrion</keyword>
<keyword id="KW-0540">Nuclease</keyword>
<keyword id="KW-0539">Nucleus</keyword>
<keyword id="KW-0597">Phosphoprotein</keyword>
<keyword id="KW-1185">Reference proteome</keyword>
<name>FEN1_THEAN</name>
<gene>
    <name evidence="1" type="primary">FEN1</name>
    <name type="ORF">TA15785</name>
</gene>
<accession>Q4UFP0</accession>
<feature type="chain" id="PRO_0000403544" description="Flap endonuclease 1">
    <location>
        <begin position="1"/>
        <end position="506"/>
    </location>
</feature>
<feature type="region of interest" description="N-domain">
    <location>
        <begin position="1"/>
        <end position="106"/>
    </location>
</feature>
<feature type="region of interest" description="I-domain">
    <location>
        <begin position="124"/>
        <end position="253"/>
    </location>
</feature>
<feature type="region of interest" description="Interaction with PCNA" evidence="1">
    <location>
        <begin position="330"/>
        <end position="338"/>
    </location>
</feature>
<feature type="region of interest" description="Disordered" evidence="2">
    <location>
        <begin position="338"/>
        <end position="388"/>
    </location>
</feature>
<feature type="compositionally biased region" description="Polar residues" evidence="2">
    <location>
        <begin position="338"/>
        <end position="347"/>
    </location>
</feature>
<feature type="compositionally biased region" description="Basic and acidic residues" evidence="2">
    <location>
        <begin position="348"/>
        <end position="363"/>
    </location>
</feature>
<feature type="compositionally biased region" description="Polar residues" evidence="2">
    <location>
        <begin position="364"/>
        <end position="381"/>
    </location>
</feature>
<feature type="binding site" evidence="1">
    <location>
        <position position="34"/>
    </location>
    <ligand>
        <name>Mg(2+)</name>
        <dbReference type="ChEBI" id="CHEBI:18420"/>
        <label>1</label>
    </ligand>
</feature>
<feature type="binding site" evidence="1">
    <location>
        <position position="47"/>
    </location>
    <ligand>
        <name>DNA</name>
        <dbReference type="ChEBI" id="CHEBI:16991"/>
    </ligand>
</feature>
<feature type="binding site" evidence="1">
    <location>
        <position position="72"/>
    </location>
    <ligand>
        <name>DNA</name>
        <dbReference type="ChEBI" id="CHEBI:16991"/>
    </ligand>
</feature>
<feature type="binding site" evidence="1">
    <location>
        <position position="88"/>
    </location>
    <ligand>
        <name>Mg(2+)</name>
        <dbReference type="ChEBI" id="CHEBI:18420"/>
        <label>1</label>
    </ligand>
</feature>
<feature type="binding site" evidence="1">
    <location>
        <position position="160"/>
    </location>
    <ligand>
        <name>DNA</name>
        <dbReference type="ChEBI" id="CHEBI:16991"/>
    </ligand>
</feature>
<feature type="binding site" evidence="1">
    <location>
        <position position="160"/>
    </location>
    <ligand>
        <name>Mg(2+)</name>
        <dbReference type="ChEBI" id="CHEBI:18420"/>
        <label>1</label>
    </ligand>
</feature>
<feature type="binding site" evidence="1">
    <location>
        <position position="162"/>
    </location>
    <ligand>
        <name>Mg(2+)</name>
        <dbReference type="ChEBI" id="CHEBI:18420"/>
        <label>1</label>
    </ligand>
</feature>
<feature type="binding site" evidence="1">
    <location>
        <position position="181"/>
    </location>
    <ligand>
        <name>Mg(2+)</name>
        <dbReference type="ChEBI" id="CHEBI:18420"/>
        <label>2</label>
    </ligand>
</feature>
<feature type="binding site" evidence="1">
    <location>
        <position position="183"/>
    </location>
    <ligand>
        <name>Mg(2+)</name>
        <dbReference type="ChEBI" id="CHEBI:18420"/>
        <label>2</label>
    </ligand>
</feature>
<feature type="binding site" evidence="1">
    <location>
        <position position="231"/>
    </location>
    <ligand>
        <name>DNA</name>
        <dbReference type="ChEBI" id="CHEBI:16991"/>
    </ligand>
</feature>
<feature type="binding site" evidence="1">
    <location>
        <position position="233"/>
    </location>
    <ligand>
        <name>DNA</name>
        <dbReference type="ChEBI" id="CHEBI:16991"/>
    </ligand>
</feature>
<feature type="binding site" evidence="1">
    <location>
        <position position="233"/>
    </location>
    <ligand>
        <name>Mg(2+)</name>
        <dbReference type="ChEBI" id="CHEBI:18420"/>
        <label>2</label>
    </ligand>
</feature>
<proteinExistence type="inferred from homology"/>
<protein>
    <recommendedName>
        <fullName evidence="1">Flap endonuclease 1</fullName>
        <shortName evidence="1">FEN-1</shortName>
        <ecNumber evidence="1">3.1.-.-</ecNumber>
    </recommendedName>
    <alternativeName>
        <fullName evidence="1">Flap structure-specific endonuclease 1</fullName>
    </alternativeName>
</protein>
<dbReference type="EC" id="3.1.-.-" evidence="1"/>
<dbReference type="EMBL" id="CR940348">
    <property type="protein sequence ID" value="CAI74076.1"/>
    <property type="molecule type" value="Genomic_DNA"/>
</dbReference>
<dbReference type="RefSeq" id="XP_951808.1">
    <property type="nucleotide sequence ID" value="XM_946715.1"/>
</dbReference>
<dbReference type="SMR" id="Q4UFP0"/>
<dbReference type="FunCoup" id="Q4UFP0">
    <property type="interactions" value="527"/>
</dbReference>
<dbReference type="STRING" id="5874.Q4UFP0"/>
<dbReference type="GeneID" id="3861997"/>
<dbReference type="KEGG" id="tan:TA15785"/>
<dbReference type="VEuPathDB" id="PiroplasmaDB:TA15785"/>
<dbReference type="eggNOG" id="KOG2519">
    <property type="taxonomic scope" value="Eukaryota"/>
</dbReference>
<dbReference type="InParanoid" id="Q4UFP0"/>
<dbReference type="OMA" id="HIYGLMN"/>
<dbReference type="OrthoDB" id="361602at2759"/>
<dbReference type="Proteomes" id="UP000001950">
    <property type="component" value="Chromosome 2"/>
</dbReference>
<dbReference type="GO" id="GO:0005739">
    <property type="term" value="C:mitochondrion"/>
    <property type="evidence" value="ECO:0007669"/>
    <property type="project" value="UniProtKB-SubCell"/>
</dbReference>
<dbReference type="GO" id="GO:0005730">
    <property type="term" value="C:nucleolus"/>
    <property type="evidence" value="ECO:0007669"/>
    <property type="project" value="UniProtKB-SubCell"/>
</dbReference>
<dbReference type="GO" id="GO:0005654">
    <property type="term" value="C:nucleoplasm"/>
    <property type="evidence" value="ECO:0007669"/>
    <property type="project" value="UniProtKB-SubCell"/>
</dbReference>
<dbReference type="GO" id="GO:0008409">
    <property type="term" value="F:5'-3' exonuclease activity"/>
    <property type="evidence" value="ECO:0007669"/>
    <property type="project" value="UniProtKB-UniRule"/>
</dbReference>
<dbReference type="GO" id="GO:0017108">
    <property type="term" value="F:5'-flap endonuclease activity"/>
    <property type="evidence" value="ECO:0007669"/>
    <property type="project" value="UniProtKB-UniRule"/>
</dbReference>
<dbReference type="GO" id="GO:0003677">
    <property type="term" value="F:DNA binding"/>
    <property type="evidence" value="ECO:0007669"/>
    <property type="project" value="UniProtKB-UniRule"/>
</dbReference>
<dbReference type="GO" id="GO:0000287">
    <property type="term" value="F:magnesium ion binding"/>
    <property type="evidence" value="ECO:0007669"/>
    <property type="project" value="UniProtKB-UniRule"/>
</dbReference>
<dbReference type="GO" id="GO:0006284">
    <property type="term" value="P:base-excision repair"/>
    <property type="evidence" value="ECO:0007669"/>
    <property type="project" value="UniProtKB-UniRule"/>
</dbReference>
<dbReference type="GO" id="GO:0043137">
    <property type="term" value="P:DNA replication, removal of RNA primer"/>
    <property type="evidence" value="ECO:0007669"/>
    <property type="project" value="UniProtKB-UniRule"/>
</dbReference>
<dbReference type="CDD" id="cd09907">
    <property type="entry name" value="H3TH_FEN1-Euk"/>
    <property type="match status" value="1"/>
</dbReference>
<dbReference type="CDD" id="cd09867">
    <property type="entry name" value="PIN_FEN1"/>
    <property type="match status" value="1"/>
</dbReference>
<dbReference type="FunFam" id="3.40.50.1010:FF:000016">
    <property type="entry name" value="Flap endonuclease 1"/>
    <property type="match status" value="1"/>
</dbReference>
<dbReference type="Gene3D" id="1.10.150.20">
    <property type="entry name" value="5' to 3' exonuclease, C-terminal subdomain"/>
    <property type="match status" value="1"/>
</dbReference>
<dbReference type="Gene3D" id="3.40.50.1010">
    <property type="entry name" value="5'-nuclease"/>
    <property type="match status" value="1"/>
</dbReference>
<dbReference type="HAMAP" id="MF_00614">
    <property type="entry name" value="Fen"/>
    <property type="match status" value="1"/>
</dbReference>
<dbReference type="InterPro" id="IPR002421">
    <property type="entry name" value="5-3_exonuclease"/>
</dbReference>
<dbReference type="InterPro" id="IPR036279">
    <property type="entry name" value="5-3_exonuclease_C_sf"/>
</dbReference>
<dbReference type="InterPro" id="IPR023426">
    <property type="entry name" value="Flap_endonuc"/>
</dbReference>
<dbReference type="InterPro" id="IPR008918">
    <property type="entry name" value="HhH2"/>
</dbReference>
<dbReference type="InterPro" id="IPR029060">
    <property type="entry name" value="PIN-like_dom_sf"/>
</dbReference>
<dbReference type="InterPro" id="IPR006086">
    <property type="entry name" value="XPG-I_dom"/>
</dbReference>
<dbReference type="InterPro" id="IPR006084">
    <property type="entry name" value="XPG/Rad2"/>
</dbReference>
<dbReference type="InterPro" id="IPR006085">
    <property type="entry name" value="XPG_DNA_repair_N"/>
</dbReference>
<dbReference type="PANTHER" id="PTHR11081:SF9">
    <property type="entry name" value="FLAP ENDONUCLEASE 1"/>
    <property type="match status" value="1"/>
</dbReference>
<dbReference type="PANTHER" id="PTHR11081">
    <property type="entry name" value="FLAP ENDONUCLEASE FAMILY MEMBER"/>
    <property type="match status" value="1"/>
</dbReference>
<dbReference type="Pfam" id="PF00867">
    <property type="entry name" value="XPG_I"/>
    <property type="match status" value="1"/>
</dbReference>
<dbReference type="Pfam" id="PF00752">
    <property type="entry name" value="XPG_N"/>
    <property type="match status" value="1"/>
</dbReference>
<dbReference type="PRINTS" id="PR00853">
    <property type="entry name" value="XPGRADSUPER"/>
</dbReference>
<dbReference type="SMART" id="SM00475">
    <property type="entry name" value="53EXOc"/>
    <property type="match status" value="1"/>
</dbReference>
<dbReference type="SMART" id="SM00279">
    <property type="entry name" value="HhH2"/>
    <property type="match status" value="1"/>
</dbReference>
<dbReference type="SMART" id="SM00484">
    <property type="entry name" value="XPGI"/>
    <property type="match status" value="1"/>
</dbReference>
<dbReference type="SMART" id="SM00485">
    <property type="entry name" value="XPGN"/>
    <property type="match status" value="1"/>
</dbReference>
<dbReference type="SUPFAM" id="SSF47807">
    <property type="entry name" value="5' to 3' exonuclease, C-terminal subdomain"/>
    <property type="match status" value="1"/>
</dbReference>
<dbReference type="SUPFAM" id="SSF88723">
    <property type="entry name" value="PIN domain-like"/>
    <property type="match status" value="1"/>
</dbReference>
<reference key="1">
    <citation type="journal article" date="2005" name="Science">
        <title>Genome of the host-cell transforming parasite Theileria annulata compared with T. parva.</title>
        <authorList>
            <person name="Pain A."/>
            <person name="Renauld H."/>
            <person name="Berriman M."/>
            <person name="Murphy L."/>
            <person name="Yeats C.A."/>
            <person name="Weir W."/>
            <person name="Kerhornou A."/>
            <person name="Aslett M."/>
            <person name="Bishop R."/>
            <person name="Bouchier C."/>
            <person name="Cochet M."/>
            <person name="Coulson R.M.R."/>
            <person name="Cronin A."/>
            <person name="de Villiers E.P."/>
            <person name="Fraser A."/>
            <person name="Fosker N."/>
            <person name="Gardner M."/>
            <person name="Goble A."/>
            <person name="Griffiths-Jones S."/>
            <person name="Harris D.E."/>
            <person name="Katzer F."/>
            <person name="Larke N."/>
            <person name="Lord A."/>
            <person name="Maser P."/>
            <person name="McKellar S."/>
            <person name="Mooney P."/>
            <person name="Morton F."/>
            <person name="Nene V."/>
            <person name="O'Neil S."/>
            <person name="Price C."/>
            <person name="Quail M.A."/>
            <person name="Rabbinowitsch E."/>
            <person name="Rawlings N.D."/>
            <person name="Rutter S."/>
            <person name="Saunders D."/>
            <person name="Seeger K."/>
            <person name="Shah T."/>
            <person name="Squares R."/>
            <person name="Squares S."/>
            <person name="Tivey A."/>
            <person name="Walker A.R."/>
            <person name="Woodward J."/>
            <person name="Dobbelaere D.A.E."/>
            <person name="Langsley G."/>
            <person name="Rajandream M.A."/>
            <person name="McKeever D."/>
            <person name="Shiels B."/>
            <person name="Tait A."/>
            <person name="Barrell B.G."/>
            <person name="Hall N."/>
        </authorList>
    </citation>
    <scope>NUCLEOTIDE SEQUENCE [LARGE SCALE GENOMIC DNA]</scope>
    <source>
        <strain>Ankara</strain>
    </source>
</reference>
<sequence length="506" mass="57281">MGIKGLIPFLSEKVPSSISELSLECLSGESLAIDASAALYQFTIAIRDSSYFSSLVNSKGESTSHIYGLMNRCSKLLEYGIKPVFVFDSKPPELKSKTLDKRRQKREEAKTDFKKAISEGDKESAKKLVGRTVKVTKDMNDSAKKLLRLMGIPVIEALEEAEAQCAYLVTKNLCHFVASEDTDTLVFGGWFLLRNVTSSANKKIVKVDLQKVLDGLEFNFDQFVDFCILCGCDYCDTLEGVGPKTAYSLVKKYQSLEEIVRFKGGDYDEFKEAKDYFLSPKVNEYDENSVKMGTIDPEGLTEFLVQENNFSKERVEKFIEKLLKFKTKKIQTSLLSFLTNPQPTNKSKSLDEGPKQSSTEDYKVNTNPSTKGSNVYTTDTNSTKDTKGIECTATTTNNNLENKVKIENEENDTGRRDSIDDLFKEFEDETNLFEQDEFEPKSKEYNLEKQHELELNVHNRNVILIDDDDDEVLTTANSEKMNCEIGKVKEEPNKKGKFSLISIYIF</sequence>
<comment type="function">
    <text evidence="1">Structure-specific nuclease with 5'-flap endonuclease and 5'-3' exonuclease activities involved in DNA replication and repair. During DNA replication, cleaves the 5'-overhanging flap structure that is generated by displacement synthesis when DNA polymerase encounters the 5'-end of a downstream Okazaki fragment. It enters the flap from the 5'-end and then tracks to cleave the flap base, leaving a nick for ligation. Also involved in the long patch base excision repair (LP-BER) pathway, by cleaving within the apurinic/apyrimidinic (AP) site-terminated flap. Acts as a genome stabilization factor that prevents flaps from equilibrating into structures that lead to duplications and deletions. Also possesses 5'-3' exonuclease activity on nicked or gapped double-stranded DNA, and exhibits RNase H activity. Also involved in replication and repair of rDNA and in repairing mitochondrial DNA.</text>
</comment>
<comment type="cofactor">
    <cofactor evidence="1">
        <name>Mg(2+)</name>
        <dbReference type="ChEBI" id="CHEBI:18420"/>
    </cofactor>
    <text evidence="1">Binds 2 magnesium ions per subunit. They probably participate in the reaction catalyzed by the enzyme. May bind an additional third magnesium ion after substrate binding.</text>
</comment>
<comment type="subunit">
    <text evidence="1">Interacts with PCNA. Three molecules of FEN1 bind to one PCNA trimer with each molecule binding to one PCNA monomer. PCNA stimulates the nuclease activity without altering cleavage specificity.</text>
</comment>
<comment type="subcellular location">
    <subcellularLocation>
        <location evidence="1">Nucleus</location>
        <location evidence="1">Nucleolus</location>
    </subcellularLocation>
    <subcellularLocation>
        <location evidence="1">Nucleus</location>
        <location evidence="1">Nucleoplasm</location>
    </subcellularLocation>
    <subcellularLocation>
        <location evidence="1">Mitochondrion</location>
    </subcellularLocation>
    <text evidence="1">Resides mostly in the nucleoli and relocalizes to the nucleoplasm upon DNA damage.</text>
</comment>
<comment type="PTM">
    <text evidence="1">Phosphorylated. Phosphorylation upon DNA damage induces relocalization to the nuclear plasma.</text>
</comment>
<comment type="similarity">
    <text evidence="1">Belongs to the XPG/RAD2 endonuclease family. FEN1 subfamily.</text>
</comment>
<evidence type="ECO:0000255" key="1">
    <source>
        <dbReference type="HAMAP-Rule" id="MF_03140"/>
    </source>
</evidence>
<evidence type="ECO:0000256" key="2">
    <source>
        <dbReference type="SAM" id="MobiDB-lite"/>
    </source>
</evidence>
<organism>
    <name type="scientific">Theileria annulata</name>
    <dbReference type="NCBI Taxonomy" id="5874"/>
    <lineage>
        <taxon>Eukaryota</taxon>
        <taxon>Sar</taxon>
        <taxon>Alveolata</taxon>
        <taxon>Apicomplexa</taxon>
        <taxon>Aconoidasida</taxon>
        <taxon>Piroplasmida</taxon>
        <taxon>Theileriidae</taxon>
        <taxon>Theileria</taxon>
    </lineage>
</organism>